<keyword id="KW-0002">3D-structure</keyword>
<keyword id="KW-0131">Cell cycle</keyword>
<keyword id="KW-0132">Cell division</keyword>
<keyword id="KW-0137">Centromere</keyword>
<keyword id="KW-0158">Chromosome</keyword>
<keyword id="KW-0479">Metal-binding</keyword>
<keyword id="KW-0498">Mitosis</keyword>
<keyword id="KW-0539">Nucleus</keyword>
<keyword id="KW-0597">Phosphoprotein</keyword>
<keyword id="KW-1267">Proteomics identification</keyword>
<keyword id="KW-1185">Reference proteome</keyword>
<keyword id="KW-0862">Zinc</keyword>
<organism>
    <name type="scientific">Homo sapiens</name>
    <name type="common">Human</name>
    <dbReference type="NCBI Taxonomy" id="9606"/>
    <lineage>
        <taxon>Eukaryota</taxon>
        <taxon>Metazoa</taxon>
        <taxon>Chordata</taxon>
        <taxon>Craniata</taxon>
        <taxon>Vertebrata</taxon>
        <taxon>Euteleostomi</taxon>
        <taxon>Mammalia</taxon>
        <taxon>Eutheria</taxon>
        <taxon>Euarchontoglires</taxon>
        <taxon>Primates</taxon>
        <taxon>Haplorrhini</taxon>
        <taxon>Catarrhini</taxon>
        <taxon>Hominidae</taxon>
        <taxon>Homo</taxon>
    </lineage>
</organism>
<gene>
    <name evidence="5" type="primary">OIP5</name>
    <name type="synonym">MIS18B</name>
</gene>
<feature type="chain" id="PRO_0000058038" description="Protein Mis18-beta">
    <location>
        <begin position="1"/>
        <end position="229"/>
    </location>
</feature>
<feature type="domain" description="Mis18" evidence="1">
    <location>
        <begin position="75"/>
        <end position="174"/>
    </location>
</feature>
<feature type="binding site" evidence="1">
    <location>
        <position position="80"/>
    </location>
    <ligand>
        <name>Zn(2+)</name>
        <dbReference type="ChEBI" id="CHEBI:29105"/>
    </ligand>
</feature>
<feature type="binding site" evidence="1">
    <location>
        <position position="83"/>
    </location>
    <ligand>
        <name>Zn(2+)</name>
        <dbReference type="ChEBI" id="CHEBI:29105"/>
    </ligand>
</feature>
<feature type="binding site" evidence="1">
    <location>
        <position position="137"/>
    </location>
    <ligand>
        <name>Zn(2+)</name>
        <dbReference type="ChEBI" id="CHEBI:29105"/>
    </ligand>
</feature>
<feature type="binding site" evidence="1">
    <location>
        <position position="140"/>
    </location>
    <ligand>
        <name>Zn(2+)</name>
        <dbReference type="ChEBI" id="CHEBI:29105"/>
    </ligand>
</feature>
<feature type="modified residue" description="Phosphothreonine" evidence="10">
    <location>
        <position position="14"/>
    </location>
</feature>
<feature type="modified residue" description="Phosphoserine" evidence="7">
    <location>
        <position position="48"/>
    </location>
</feature>
<feature type="modified residue" description="Phosphothreonine" evidence="7 8 10">
    <location>
        <position position="221"/>
    </location>
</feature>
<feature type="modified residue" description="Phosphoserine" evidence="7 8 9 10">
    <location>
        <position position="225"/>
    </location>
</feature>
<feature type="mutagenesis site" description="Abolishes interaction with MIS18A; when associated with D-172." evidence="3">
    <original>V</original>
    <variation>E</variation>
    <location>
        <position position="77"/>
    </location>
</feature>
<feature type="mutagenesis site" description="Abolishes interaction with MIS18A; when associated with E-77." evidence="3">
    <original>Y</original>
    <variation>D</variation>
    <location>
        <position position="172"/>
    </location>
</feature>
<feature type="helix" evidence="11">
    <location>
        <begin position="191"/>
        <end position="218"/>
    </location>
</feature>
<proteinExistence type="evidence at protein level"/>
<reference key="1">
    <citation type="journal article" date="1998" name="Mol. Microbiol.">
        <title>Using the yeast two-hybrid system to identify human epithelial cell proteins that bind gonococcal Opa proteins: intracellular gonococci bind pyruvate kinase via their Opa proteins and require host pyruvate for growth.</title>
        <authorList>
            <person name="Williams J.M."/>
            <person name="Chen G.-C."/>
            <person name="Zhu L."/>
            <person name="Rest R.F."/>
        </authorList>
    </citation>
    <scope>NUCLEOTIDE SEQUENCE [MRNA]</scope>
    <scope>SUBUNIT</scope>
</reference>
<reference key="2">
    <citation type="journal article" date="2004" name="Genome Res.">
        <title>The status, quality, and expansion of the NIH full-length cDNA project: the Mammalian Gene Collection (MGC).</title>
        <authorList>
            <consortium name="The MGC Project Team"/>
        </authorList>
    </citation>
    <scope>NUCLEOTIDE SEQUENCE [LARGE SCALE MRNA]</scope>
    <source>
        <tissue>Uterus</tissue>
    </source>
</reference>
<reference key="3">
    <citation type="journal article" date="2007" name="Dev. Cell">
        <title>Priming of centromere for CENP-A recruitment by human hMis18alpha, hMis18beta, and M18BP1.</title>
        <authorList>
            <person name="Fujita Y."/>
            <person name="Hayashi T."/>
            <person name="Kiyomitsu T."/>
            <person name="Toyoda Y."/>
            <person name="Kokubu A."/>
            <person name="Obuse C."/>
            <person name="Yanagida M."/>
        </authorList>
    </citation>
    <scope>FUNCTION</scope>
    <scope>SUBCELLULAR LOCATION</scope>
    <scope>IDENTIFICATION BY MASS SPECTROMETRY</scope>
    <scope>INTERACTION WITH MIS18A</scope>
    <scope>IDENTIFICATION IN A COMPLEX CONTAINING MIS18A; MIS18B; MIS18BP1; RBBP7 AND RBBP4</scope>
</reference>
<reference key="4">
    <citation type="journal article" date="2008" name="Mol. Cell">
        <title>Kinase-selective enrichment enables quantitative phosphoproteomics of the kinome across the cell cycle.</title>
        <authorList>
            <person name="Daub H."/>
            <person name="Olsen J.V."/>
            <person name="Bairlein M."/>
            <person name="Gnad F."/>
            <person name="Oppermann F.S."/>
            <person name="Korner R."/>
            <person name="Greff Z."/>
            <person name="Keri G."/>
            <person name="Stemmann O."/>
            <person name="Mann M."/>
        </authorList>
    </citation>
    <scope>IDENTIFICATION BY MASS SPECTROMETRY [LARGE SCALE ANALYSIS]</scope>
    <source>
        <tissue>Cervix carcinoma</tissue>
    </source>
</reference>
<reference key="5">
    <citation type="journal article" date="2008" name="Proc. Natl. Acad. Sci. U.S.A.">
        <title>A quantitative atlas of mitotic phosphorylation.</title>
        <authorList>
            <person name="Dephoure N."/>
            <person name="Zhou C."/>
            <person name="Villen J."/>
            <person name="Beausoleil S.A."/>
            <person name="Bakalarski C.E."/>
            <person name="Elledge S.J."/>
            <person name="Gygi S.P."/>
        </authorList>
    </citation>
    <scope>IDENTIFICATION BY MASS SPECTROMETRY [LARGE SCALE ANALYSIS]</scope>
    <source>
        <tissue>Cervix carcinoma</tissue>
    </source>
</reference>
<reference key="6">
    <citation type="journal article" date="2009" name="Sci. Signal.">
        <title>Quantitative phosphoproteomic analysis of T cell receptor signaling reveals system-wide modulation of protein-protein interactions.</title>
        <authorList>
            <person name="Mayya V."/>
            <person name="Lundgren D.H."/>
            <person name="Hwang S.-I."/>
            <person name="Rezaul K."/>
            <person name="Wu L."/>
            <person name="Eng J.K."/>
            <person name="Rodionov V."/>
            <person name="Han D.K."/>
        </authorList>
    </citation>
    <scope>PHOSPHORYLATION [LARGE SCALE ANALYSIS] AT SER-48; THR-221 AND SER-225</scope>
    <scope>IDENTIFICATION BY MASS SPECTROMETRY [LARGE SCALE ANALYSIS]</scope>
    <source>
        <tissue>Leukemic T-cell</tissue>
    </source>
</reference>
<reference key="7">
    <citation type="journal article" date="2010" name="Sci. Signal.">
        <title>Quantitative phosphoproteomics reveals widespread full phosphorylation site occupancy during mitosis.</title>
        <authorList>
            <person name="Olsen J.V."/>
            <person name="Vermeulen M."/>
            <person name="Santamaria A."/>
            <person name="Kumar C."/>
            <person name="Miller M.L."/>
            <person name="Jensen L.J."/>
            <person name="Gnad F."/>
            <person name="Cox J."/>
            <person name="Jensen T.S."/>
            <person name="Nigg E.A."/>
            <person name="Brunak S."/>
            <person name="Mann M."/>
        </authorList>
    </citation>
    <scope>PHOSPHORYLATION [LARGE SCALE ANALYSIS] AT THR-221 AND SER-225</scope>
    <scope>IDENTIFICATION BY MASS SPECTROMETRY [LARGE SCALE ANALYSIS]</scope>
    <source>
        <tissue>Cervix carcinoma</tissue>
    </source>
</reference>
<reference key="8">
    <citation type="journal article" date="2011" name="Sci. Signal.">
        <title>System-wide temporal characterization of the proteome and phosphoproteome of human embryonic stem cell differentiation.</title>
        <authorList>
            <person name="Rigbolt K.T."/>
            <person name="Prokhorova T.A."/>
            <person name="Akimov V."/>
            <person name="Henningsen J."/>
            <person name="Johansen P.T."/>
            <person name="Kratchmarova I."/>
            <person name="Kassem M."/>
            <person name="Mann M."/>
            <person name="Olsen J.V."/>
            <person name="Blagoev B."/>
        </authorList>
    </citation>
    <scope>PHOSPHORYLATION [LARGE SCALE ANALYSIS] AT SER-225</scope>
    <scope>IDENTIFICATION BY MASS SPECTROMETRY [LARGE SCALE ANALYSIS]</scope>
</reference>
<reference key="9">
    <citation type="journal article" date="2013" name="J. Proteome Res.">
        <title>Toward a comprehensive characterization of a human cancer cell phosphoproteome.</title>
        <authorList>
            <person name="Zhou H."/>
            <person name="Di Palma S."/>
            <person name="Preisinger C."/>
            <person name="Peng M."/>
            <person name="Polat A.N."/>
            <person name="Heck A.J."/>
            <person name="Mohammed S."/>
        </authorList>
    </citation>
    <scope>PHOSPHORYLATION [LARGE SCALE ANALYSIS] AT THR-14; THR-221 AND SER-225</scope>
    <scope>IDENTIFICATION BY MASS SPECTROMETRY [LARGE SCALE ANALYSIS]</scope>
    <source>
        <tissue>Cervix carcinoma</tissue>
        <tissue>Erythroleukemia</tissue>
    </source>
</reference>
<reference key="10">
    <citation type="journal article" date="2016" name="EMBO Rep.">
        <title>Centromere localization and function of Mis18 requires Yippee-like domain-mediated oligomerization.</title>
        <authorList>
            <person name="Subramanian L."/>
            <person name="Medina-Pritchard B."/>
            <person name="Barton R."/>
            <person name="Spiller F."/>
            <person name="Kulasegaran-Shylini R."/>
            <person name="Radaviciute G."/>
            <person name="Allshire R.C."/>
            <person name="Arockia Jeyaprakash A."/>
        </authorList>
    </citation>
    <scope>SUBUNIT</scope>
    <scope>MUTAGENESIS OF VAL-77 AND TYR-172</scope>
</reference>
<name>MS18B_HUMAN</name>
<protein>
    <recommendedName>
        <fullName>Protein Mis18-beta</fullName>
    </recommendedName>
    <alternativeName>
        <fullName>Cancer/testis antigen 86</fullName>
        <shortName>CT86</shortName>
    </alternativeName>
    <alternativeName>
        <fullName evidence="5">Opa-interacting protein 5</fullName>
        <shortName evidence="5">OIP-5</shortName>
    </alternativeName>
</protein>
<comment type="function">
    <text evidence="2">Required for recruitment of CENPA to centromeres and normal chromosome segregation during mitosis.</text>
</comment>
<comment type="subunit">
    <text evidence="2 3 4">Homodimer, and heterodimer with MIS18A (PubMed:17199038, PubMed:26921242). Identified in a complex containing MIS18A, OIP5/MIS18B, MIS18BP1, RBBP7 and RBBP4 (PubMed:17199038). Binds outer membrane protein OpaP from Neisseria gonorrhoeae (in vitro) (PubMed:9466265).</text>
</comment>
<comment type="interaction">
    <interactant intactId="EBI-536879">
        <id>O43482</id>
    </interactant>
    <interactant intactId="EBI-2809489">
        <id>Q9NQ94</id>
        <label>A1CF</label>
    </interactant>
    <organismsDiffer>false</organismsDiffer>
    <experiments>3</experiments>
</comment>
<comment type="interaction">
    <interactant intactId="EBI-536879">
        <id>O43482</id>
    </interactant>
    <interactant intactId="EBI-11096309">
        <id>Q9NYB9-2</id>
        <label>ABI2</label>
    </interactant>
    <organismsDiffer>false</organismsDiffer>
    <experiments>3</experiments>
</comment>
<comment type="interaction">
    <interactant intactId="EBI-536879">
        <id>O43482</id>
    </interactant>
    <interactant intactId="EBI-742038">
        <id>Q9P2A4</id>
        <label>ABI3</label>
    </interactant>
    <organismsDiffer>false</organismsDiffer>
    <experiments>3</experiments>
</comment>
<comment type="interaction">
    <interactant intactId="EBI-536879">
        <id>O43482</id>
    </interactant>
    <interactant intactId="EBI-727098">
        <id>P21549</id>
        <label>AGXT</label>
    </interactant>
    <organismsDiffer>false</organismsDiffer>
    <experiments>3</experiments>
</comment>
<comment type="interaction">
    <interactant intactId="EBI-536879">
        <id>O43482</id>
    </interactant>
    <interactant intactId="EBI-21535880">
        <id>Q92870-2</id>
        <label>APBB2</label>
    </interactant>
    <organismsDiffer>false</organismsDiffer>
    <experiments>3</experiments>
</comment>
<comment type="interaction">
    <interactant intactId="EBI-536879">
        <id>O43482</id>
    </interactant>
    <interactant intactId="EBI-1050106">
        <id>O75934</id>
        <label>BCAS2</label>
    </interactant>
    <organismsDiffer>false</organismsDiffer>
    <experiments>3</experiments>
</comment>
<comment type="interaction">
    <interactant intactId="EBI-536879">
        <id>O43482</id>
    </interactant>
    <interactant intactId="EBI-745073">
        <id>Q9BXY8</id>
        <label>BEX2</label>
    </interactant>
    <organismsDiffer>false</organismsDiffer>
    <experiments>3</experiments>
</comment>
<comment type="interaction">
    <interactant intactId="EBI-536879">
        <id>O43482</id>
    </interactant>
    <interactant intactId="EBI-10229433">
        <id>Q13515</id>
        <label>BFSP2</label>
    </interactant>
    <organismsDiffer>false</organismsDiffer>
    <experiments>3</experiments>
</comment>
<comment type="interaction">
    <interactant intactId="EBI-536879">
        <id>O43482</id>
    </interactant>
    <interactant intactId="EBI-465861">
        <id>Q8TDH9</id>
        <label>BLOC1S5</label>
    </interactant>
    <organismsDiffer>false</organismsDiffer>
    <experiments>3</experiments>
</comment>
<comment type="interaction">
    <interactant intactId="EBI-536879">
        <id>O43482</id>
    </interactant>
    <interactant intactId="EBI-946029">
        <id>Q6P1W5</id>
        <label>C1orf94</label>
    </interactant>
    <organismsDiffer>false</organismsDiffer>
    <experiments>6</experiments>
</comment>
<comment type="interaction">
    <interactant intactId="EBI-536879">
        <id>O43482</id>
    </interactant>
    <interactant intactId="EBI-11524851">
        <id>Q8NA61-2</id>
        <label>CBY2</label>
    </interactant>
    <organismsDiffer>false</organismsDiffer>
    <experiments>3</experiments>
</comment>
<comment type="interaction">
    <interactant intactId="EBI-536879">
        <id>O43482</id>
    </interactant>
    <interactant intactId="EBI-3943153">
        <id>O60826</id>
        <label>CCDC22</label>
    </interactant>
    <organismsDiffer>false</organismsDiffer>
    <experiments>3</experiments>
</comment>
<comment type="interaction">
    <interactant intactId="EBI-536879">
        <id>O43482</id>
    </interactant>
    <interactant intactId="EBI-1104933">
        <id>Q8N4L8</id>
        <label>CCDC24</label>
    </interactant>
    <organismsDiffer>false</organismsDiffer>
    <experiments>5</experiments>
</comment>
<comment type="interaction">
    <interactant intactId="EBI-536879">
        <id>O43482</id>
    </interactant>
    <interactant intactId="EBI-10175300">
        <id>Q8TD31-3</id>
        <label>CCHCR1</label>
    </interactant>
    <organismsDiffer>false</organismsDiffer>
    <experiments>3</experiments>
</comment>
<comment type="interaction">
    <interactant intactId="EBI-536879">
        <id>O43482</id>
    </interactant>
    <interactant intactId="EBI-11063830">
        <id>Q86X02</id>
        <label>CDR2L</label>
    </interactant>
    <organismsDiffer>false</organismsDiffer>
    <experiments>3</experiments>
</comment>
<comment type="interaction">
    <interactant intactId="EBI-536879">
        <id>O43482</id>
    </interactant>
    <interactant intactId="EBI-743488">
        <id>Q96L14</id>
        <label>CEP170P1</label>
    </interactant>
    <organismsDiffer>false</organismsDiffer>
    <experiments>5</experiments>
</comment>
<comment type="interaction">
    <interactant intactId="EBI-536879">
        <id>O43482</id>
    </interactant>
    <interactant intactId="EBI-11752486">
        <id>Q86XR8-3</id>
        <label>CEP57</label>
    </interactant>
    <organismsDiffer>false</organismsDiffer>
    <experiments>3</experiments>
</comment>
<comment type="interaction">
    <interactant intactId="EBI-536879">
        <id>O43482</id>
    </interactant>
    <interactant intactId="EBI-10274247">
        <id>Q8TCT0</id>
        <label>CERK</label>
    </interactant>
    <organismsDiffer>false</organismsDiffer>
    <experiments>3</experiments>
</comment>
<comment type="interaction">
    <interactant intactId="EBI-536879">
        <id>O43482</id>
    </interactant>
    <interactant intactId="EBI-2321769">
        <id>Q9Y6H1</id>
        <label>CHCHD2</label>
    </interactant>
    <organismsDiffer>false</organismsDiffer>
    <experiments>3</experiments>
</comment>
<comment type="interaction">
    <interactant intactId="EBI-536879">
        <id>O43482</id>
    </interactant>
    <interactant intactId="EBI-12155483">
        <id>Q9H1P6</id>
        <label>CIMIP1</label>
    </interactant>
    <organismsDiffer>false</organismsDiffer>
    <experiments>3</experiments>
</comment>
<comment type="interaction">
    <interactant intactId="EBI-536879">
        <id>O43482</id>
    </interactant>
    <interactant intactId="EBI-1053725">
        <id>P10606</id>
        <label>COX5B</label>
    </interactant>
    <organismsDiffer>false</organismsDiffer>
    <experiments>3</experiments>
</comment>
<comment type="interaction">
    <interactant intactId="EBI-536879">
        <id>O43482</id>
    </interactant>
    <interactant intactId="EBI-739773">
        <id>Q9BSW2</id>
        <label>CRACR2A</label>
    </interactant>
    <organismsDiffer>false</organismsDiffer>
    <experiments>3</experiments>
</comment>
<comment type="interaction">
    <interactant intactId="EBI-536879">
        <id>O43482</id>
    </interactant>
    <interactant intactId="EBI-11962928">
        <id>Q9UI47-2</id>
        <label>CTNNA3</label>
    </interactant>
    <organismsDiffer>false</organismsDiffer>
    <experiments>3</experiments>
</comment>
<comment type="interaction">
    <interactant intactId="EBI-536879">
        <id>O43482</id>
    </interactant>
    <interactant intactId="EBI-9679045">
        <id>Q9NQL9</id>
        <label>DMRT3</label>
    </interactant>
    <organismsDiffer>false</organismsDiffer>
    <experiments>3</experiments>
</comment>
<comment type="interaction">
    <interactant intactId="EBI-536879">
        <id>O43482</id>
    </interactant>
    <interactant intactId="EBI-465804">
        <id>Q96EV8</id>
        <label>DTNBP1</label>
    </interactant>
    <organismsDiffer>false</organismsDiffer>
    <experiments>3</experiments>
</comment>
<comment type="interaction">
    <interactant intactId="EBI-536879">
        <id>O43482</id>
    </interactant>
    <interactant intactId="EBI-740376">
        <id>Q86UW9</id>
        <label>DTX2</label>
    </interactant>
    <organismsDiffer>false</organismsDiffer>
    <experiments>3</experiments>
</comment>
<comment type="interaction">
    <interactant intactId="EBI-536879">
        <id>O43482</id>
    </interactant>
    <interactant intactId="EBI-7357329">
        <id>Q9H596</id>
        <label>DUSP21</label>
    </interactant>
    <organismsDiffer>false</organismsDiffer>
    <experiments>3</experiments>
</comment>
<comment type="interaction">
    <interactant intactId="EBI-536879">
        <id>O43482</id>
    </interactant>
    <interactant intactId="EBI-743105">
        <id>Q5JVL4</id>
        <label>EFHC1</label>
    </interactant>
    <organismsDiffer>false</organismsDiffer>
    <experiments>3</experiments>
</comment>
<comment type="interaction">
    <interactant intactId="EBI-536879">
        <id>O43482</id>
    </interactant>
    <interactant intactId="EBI-301024">
        <id>Q9NRA8</id>
        <label>EIF4ENIF1</label>
    </interactant>
    <organismsDiffer>false</organismsDiffer>
    <experiments>3</experiments>
</comment>
<comment type="interaction">
    <interactant intactId="EBI-536879">
        <id>O43482</id>
    </interactant>
    <interactant intactId="EBI-3928124">
        <id>Q96DF8</id>
        <label>ESS2</label>
    </interactant>
    <organismsDiffer>false</organismsDiffer>
    <experiments>3</experiments>
</comment>
<comment type="interaction">
    <interactant intactId="EBI-536879">
        <id>O43482</id>
    </interactant>
    <interactant intactId="EBI-13371226">
        <id>Q9NYK6-3</id>
        <label>EURL</label>
    </interactant>
    <organismsDiffer>false</organismsDiffer>
    <experiments>3</experiments>
</comment>
<comment type="interaction">
    <interactant intactId="EBI-536879">
        <id>O43482</id>
    </interactant>
    <interactant intactId="EBI-7225287">
        <id>Q96MY7</id>
        <label>FAM161B</label>
    </interactant>
    <organismsDiffer>false</organismsDiffer>
    <experiments>4</experiments>
</comment>
<comment type="interaction">
    <interactant intactId="EBI-536879">
        <id>O43482</id>
    </interactant>
    <interactant intactId="EBI-2807642">
        <id>Q8WU58</id>
        <label>FAM222B</label>
    </interactant>
    <organismsDiffer>false</organismsDiffer>
    <experiments>3</experiments>
</comment>
<comment type="interaction">
    <interactant intactId="EBI-536879">
        <id>O43482</id>
    </interactant>
    <interactant intactId="EBI-348399">
        <id>P22607</id>
        <label>FGFR3</label>
    </interactant>
    <organismsDiffer>false</organismsDiffer>
    <experiments>3</experiments>
</comment>
<comment type="interaction">
    <interactant intactId="EBI-536879">
        <id>O43482</id>
    </interactant>
    <interactant intactId="EBI-5661036">
        <id>A1L4K1</id>
        <label>FSD2</label>
    </interactant>
    <organismsDiffer>false</organismsDiffer>
    <experiments>3</experiments>
</comment>
<comment type="interaction">
    <interactant intactId="EBI-536879">
        <id>O43482</id>
    </interactant>
    <interactant intactId="EBI-372506">
        <id>Q8TAE8</id>
        <label>GADD45GIP1</label>
    </interactant>
    <organismsDiffer>false</organismsDiffer>
    <experiments>3</experiments>
</comment>
<comment type="interaction">
    <interactant intactId="EBI-536879">
        <id>O43482</id>
    </interactant>
    <interactant intactId="EBI-746252">
        <id>Q96CN9</id>
        <label>GCC1</label>
    </interactant>
    <organismsDiffer>false</organismsDiffer>
    <experiments>3</experiments>
</comment>
<comment type="interaction">
    <interactant intactId="EBI-536879">
        <id>O43482</id>
    </interactant>
    <interactant intactId="EBI-744104">
        <id>P55040</id>
        <label>GEM</label>
    </interactant>
    <organismsDiffer>false</organismsDiffer>
    <experiments>3</experiments>
</comment>
<comment type="interaction">
    <interactant intactId="EBI-536879">
        <id>O43482</id>
    </interactant>
    <interactant intactId="EBI-7251368">
        <id>Q9BZE0</id>
        <label>GLIS2</label>
    </interactant>
    <organismsDiffer>false</organismsDiffer>
    <experiments>3</experiments>
</comment>
<comment type="interaction">
    <interactant intactId="EBI-536879">
        <id>O43482</id>
    </interactant>
    <interactant intactId="EBI-751540">
        <id>O95872</id>
        <label>GPANK1</label>
    </interactant>
    <organismsDiffer>false</organismsDiffer>
    <experiments>3</experiments>
</comment>
<comment type="interaction">
    <interactant intactId="EBI-536879">
        <id>O43482</id>
    </interactant>
    <interactant intactId="EBI-713355">
        <id>Q13227</id>
        <label>GPS2</label>
    </interactant>
    <organismsDiffer>false</organismsDiffer>
    <experiments>5</experiments>
</comment>
<comment type="interaction">
    <interactant intactId="EBI-536879">
        <id>O43482</id>
    </interactant>
    <interactant intactId="EBI-8285963">
        <id>Q14957</id>
        <label>GRIN2C</label>
    </interactant>
    <organismsDiffer>false</organismsDiffer>
    <experiments>3</experiments>
</comment>
<comment type="interaction">
    <interactant intactId="EBI-536879">
        <id>O43482</id>
    </interactant>
    <interactant intactId="EBI-747754">
        <id>P28799</id>
        <label>GRN</label>
    </interactant>
    <organismsDiffer>false</organismsDiffer>
    <experiments>3</experiments>
</comment>
<comment type="interaction">
    <interactant intactId="EBI-536879">
        <id>O43482</id>
    </interactant>
    <interactant intactId="EBI-11956675">
        <id>Q9GZV7</id>
        <label>HAPLN2</label>
    </interactant>
    <organismsDiffer>false</organismsDiffer>
    <experiments>3</experiments>
</comment>
<comment type="interaction">
    <interactant intactId="EBI-536879">
        <id>O43482</id>
    </interactant>
    <interactant intactId="EBI-740220">
        <id>O14964</id>
        <label>HGS</label>
    </interactant>
    <organismsDiffer>false</organismsDiffer>
    <experiments>3</experiments>
</comment>
<comment type="interaction">
    <interactant intactId="EBI-536879">
        <id>O43482</id>
    </interactant>
    <interactant intactId="EBI-3893317">
        <id>P09067</id>
        <label>HOXB5</label>
    </interactant>
    <organismsDiffer>false</organismsDiffer>
    <experiments>3</experiments>
</comment>
<comment type="interaction">
    <interactant intactId="EBI-536879">
        <id>O43482</id>
    </interactant>
    <interactant intactId="EBI-745290">
        <id>P17482</id>
        <label>HOXB9</label>
    </interactant>
    <organismsDiffer>false</organismsDiffer>
    <experiments>3</experiments>
</comment>
<comment type="interaction">
    <interactant intactId="EBI-536879">
        <id>O43482</id>
    </interactant>
    <interactant intactId="EBI-1752118">
        <id>P31273</id>
        <label>HOXC8</label>
    </interactant>
    <organismsDiffer>false</organismsDiffer>
    <experiments>3</experiments>
</comment>
<comment type="interaction">
    <interactant intactId="EBI-536879">
        <id>O43482</id>
    </interactant>
    <interactant intactId="EBI-350145">
        <id>P01112</id>
        <label>HRAS</label>
    </interactant>
    <organismsDiffer>false</organismsDiffer>
    <experiments>3</experiments>
</comment>
<comment type="interaction">
    <interactant intactId="EBI-536879">
        <id>O43482</id>
    </interactant>
    <interactant intactId="EBI-12056251">
        <id>Q9ULV5-2</id>
        <label>HSF4</label>
    </interactant>
    <organismsDiffer>false</organismsDiffer>
    <experiments>5</experiments>
</comment>
<comment type="interaction">
    <interactant intactId="EBI-536879">
        <id>O43482</id>
    </interactant>
    <interactant intactId="EBI-17178971">
        <id>Q14005-2</id>
        <label>IL16</label>
    </interactant>
    <organismsDiffer>false</organismsDiffer>
    <experiments>3</experiments>
</comment>
<comment type="interaction">
    <interactant intactId="EBI-536879">
        <id>O43482</id>
    </interactant>
    <interactant intactId="EBI-2556193">
        <id>Q63ZY3</id>
        <label>KANK2</label>
    </interactant>
    <organismsDiffer>false</organismsDiffer>
    <experiments>3</experiments>
</comment>
<comment type="interaction">
    <interactant intactId="EBI-536879">
        <id>O43482</id>
    </interactant>
    <interactant intactId="EBI-10975473">
        <id>O60333-2</id>
        <label>KIF1B</label>
    </interactant>
    <organismsDiffer>false</organismsDiffer>
    <experiments>3</experiments>
</comment>
<comment type="interaction">
    <interactant intactId="EBI-536879">
        <id>O43482</id>
    </interactant>
    <interactant intactId="EBI-8472129">
        <id>Q9HAQ2</id>
        <label>KIF9</label>
    </interactant>
    <organismsDiffer>false</organismsDiffer>
    <experiments>3</experiments>
</comment>
<comment type="interaction">
    <interactant intactId="EBI-536879">
        <id>O43482</id>
    </interactant>
    <interactant intactId="EBI-948266">
        <id>O14901</id>
        <label>KLF11</label>
    </interactant>
    <organismsDiffer>false</organismsDiffer>
    <experiments>3</experiments>
</comment>
<comment type="interaction">
    <interactant intactId="EBI-536879">
        <id>O43482</id>
    </interactant>
    <interactant intactId="EBI-6426443">
        <id>Q2WGJ6</id>
        <label>KLHL38</label>
    </interactant>
    <organismsDiffer>false</organismsDiffer>
    <experiments>3</experiments>
</comment>
<comment type="interaction">
    <interactant intactId="EBI-536879">
        <id>O43482</id>
    </interactant>
    <interactant intactId="EBI-739890">
        <id>Q9P2K6</id>
        <label>KLHL42</label>
    </interactant>
    <organismsDiffer>false</organismsDiffer>
    <experiments>3</experiments>
</comment>
<comment type="interaction">
    <interactant intactId="EBI-536879">
        <id>O43482</id>
    </interactant>
    <interactant intactId="EBI-373334">
        <id>Q9Y448</id>
        <label>KNSTRN</label>
    </interactant>
    <organismsDiffer>false</organismsDiffer>
    <experiments>3</experiments>
</comment>
<comment type="interaction">
    <interactant intactId="EBI-536879">
        <id>O43482</id>
    </interactant>
    <interactant intactId="EBI-702178">
        <id>P02533</id>
        <label>KRT14</label>
    </interactant>
    <organismsDiffer>false</organismsDiffer>
    <experiments>3</experiments>
</comment>
<comment type="interaction">
    <interactant intactId="EBI-536879">
        <id>O43482</id>
    </interactant>
    <interactant intactId="EBI-739566">
        <id>P19012</id>
        <label>KRT15</label>
    </interactant>
    <organismsDiffer>false</organismsDiffer>
    <experiments>4</experiments>
</comment>
<comment type="interaction">
    <interactant intactId="EBI-536879">
        <id>O43482</id>
    </interactant>
    <interactant intactId="EBI-3044087">
        <id>Q7Z3Y8</id>
        <label>KRT27</label>
    </interactant>
    <organismsDiffer>false</organismsDiffer>
    <experiments>3</experiments>
</comment>
<comment type="interaction">
    <interactant intactId="EBI-536879">
        <id>O43482</id>
    </interactant>
    <interactant intactId="EBI-2430095">
        <id>P12035</id>
        <label>KRT3</label>
    </interactant>
    <organismsDiffer>false</organismsDiffer>
    <experiments>3</experiments>
</comment>
<comment type="interaction">
    <interactant intactId="EBI-536879">
        <id>O43482</id>
    </interactant>
    <interactant intactId="EBI-1058674">
        <id>Q92764</id>
        <label>KRT35</label>
    </interactant>
    <organismsDiffer>false</organismsDiffer>
    <experiments>3</experiments>
</comment>
<comment type="interaction">
    <interactant intactId="EBI-536879">
        <id>O43482</id>
    </interactant>
    <interactant intactId="EBI-1045716">
        <id>O76014</id>
        <label>KRT37</label>
    </interactant>
    <organismsDiffer>false</organismsDiffer>
    <experiments>3</experiments>
</comment>
<comment type="interaction">
    <interactant intactId="EBI-536879">
        <id>O43482</id>
    </interactant>
    <interactant intactId="EBI-10171697">
        <id>Q6A162</id>
        <label>KRT40</label>
    </interactant>
    <organismsDiffer>false</organismsDiffer>
    <experiments>3</experiments>
</comment>
<comment type="interaction">
    <interactant intactId="EBI-536879">
        <id>O43482</id>
    </interactant>
    <interactant intactId="EBI-740907">
        <id>P04259</id>
        <label>KRT6B</label>
    </interactant>
    <organismsDiffer>false</organismsDiffer>
    <experiments>3</experiments>
</comment>
<comment type="interaction">
    <interactant intactId="EBI-536879">
        <id>O43482</id>
    </interactant>
    <interactant intactId="EBI-2949715">
        <id>O95678</id>
        <label>KRT75</label>
    </interactant>
    <organismsDiffer>false</organismsDiffer>
    <experiments>5</experiments>
</comment>
<comment type="interaction">
    <interactant intactId="EBI-536879">
        <id>O43482</id>
    </interactant>
    <interactant intactId="EBI-739648">
        <id>Q14533</id>
        <label>KRT81</label>
    </interactant>
    <organismsDiffer>false</organismsDiffer>
    <experiments>5</experiments>
</comment>
<comment type="interaction">
    <interactant intactId="EBI-536879">
        <id>O43482</id>
    </interactant>
    <interactant intactId="EBI-10221390">
        <id>P78385</id>
        <label>KRT83</label>
    </interactant>
    <organismsDiffer>false</organismsDiffer>
    <experiments>3</experiments>
</comment>
<comment type="interaction">
    <interactant intactId="EBI-536879">
        <id>O43482</id>
    </interactant>
    <interactant intactId="EBI-9996498">
        <id>O43790</id>
        <label>KRT86</label>
    </interactant>
    <organismsDiffer>false</organismsDiffer>
    <experiments>3</experiments>
</comment>
<comment type="interaction">
    <interactant intactId="EBI-536879">
        <id>O43482</id>
    </interactant>
    <interactant intactId="EBI-11953846">
        <id>Q52LG2</id>
        <label>KRTAP13-2</label>
    </interactant>
    <organismsDiffer>false</organismsDiffer>
    <experiments>3</experiments>
</comment>
<comment type="interaction">
    <interactant intactId="EBI-536879">
        <id>O43482</id>
    </interactant>
    <interactant intactId="EBI-1048945">
        <id>Q3LI72</id>
        <label>KRTAP19-5</label>
    </interactant>
    <organismsDiffer>false</organismsDiffer>
    <experiments>3</experiments>
</comment>
<comment type="interaction">
    <interactant intactId="EBI-536879">
        <id>O43482</id>
    </interactant>
    <interactant intactId="EBI-12805508">
        <id>Q3LI70</id>
        <label>KRTAP19-6</label>
    </interactant>
    <organismsDiffer>false</organismsDiffer>
    <experiments>3</experiments>
</comment>
<comment type="interaction">
    <interactant intactId="EBI-536879">
        <id>O43482</id>
    </interactant>
    <interactant intactId="EBI-726510">
        <id>Q96BZ8</id>
        <label>LENG1</label>
    </interactant>
    <organismsDiffer>false</organismsDiffer>
    <experiments>3</experiments>
</comment>
<comment type="interaction">
    <interactant intactId="EBI-536879">
        <id>O43482</id>
    </interactant>
    <interactant intactId="EBI-394607">
        <id>Q9NPJ6</id>
        <label>MED4</label>
    </interactant>
    <organismsDiffer>false</organismsDiffer>
    <experiments>3</experiments>
</comment>
<comment type="interaction">
    <interactant intactId="EBI-536879">
        <id>O43482</id>
    </interactant>
    <interactant intactId="EBI-8025850">
        <id>O14770-4</id>
        <label>MEIS2</label>
    </interactant>
    <organismsDiffer>false</organismsDiffer>
    <experiments>3</experiments>
</comment>
<comment type="interaction">
    <interactant intactId="EBI-536879">
        <id>O43482</id>
    </interactant>
    <interactant intactId="EBI-2801965">
        <id>Q5JXC2</id>
        <label>MIIP</label>
    </interactant>
    <organismsDiffer>false</organismsDiffer>
    <experiments>3</experiments>
</comment>
<comment type="interaction">
    <interactant intactId="EBI-536879">
        <id>O43482</id>
    </interactant>
    <interactant intactId="EBI-1104552">
        <id>Q9NYP9</id>
        <label>MIS18A</label>
    </interactant>
    <organismsDiffer>false</organismsDiffer>
    <experiments>25</experiments>
</comment>
<comment type="interaction">
    <interactant intactId="EBI-536879">
        <id>O43482</id>
    </interactant>
    <interactant intactId="EBI-9870821">
        <id>Q6P0N0</id>
        <label>MIS18BP1</label>
    </interactant>
    <organismsDiffer>false</organismsDiffer>
    <experiments>6</experiments>
</comment>
<comment type="interaction">
    <interactant intactId="EBI-536879">
        <id>O43482</id>
    </interactant>
    <interactant intactId="EBI-2555085">
        <id>Q8IVT2</id>
        <label>MISP</label>
    </interactant>
    <organismsDiffer>false</organismsDiffer>
    <experiments>3</experiments>
</comment>
<comment type="interaction">
    <interactant intactId="EBI-536879">
        <id>O43482</id>
    </interactant>
    <interactant intactId="EBI-9675802">
        <id>Q6PF18</id>
        <label>MORN3</label>
    </interactant>
    <organismsDiffer>false</organismsDiffer>
    <experiments>3</experiments>
</comment>
<comment type="interaction">
    <interactant intactId="EBI-536879">
        <id>O43482</id>
    </interactant>
    <interactant intactId="EBI-10318831">
        <id>Q9P2K5-2</id>
        <label>MYEF2</label>
    </interactant>
    <organismsDiffer>false</organismsDiffer>
    <experiments>5</experiments>
</comment>
<comment type="interaction">
    <interactant intactId="EBI-536879">
        <id>O43482</id>
    </interactant>
    <interactant intactId="EBI-1759414">
        <id>Q8NFW9</id>
        <label>MYRIP</label>
    </interactant>
    <organismsDiffer>false</organismsDiffer>
    <experiments>3</experiments>
</comment>
<comment type="interaction">
    <interactant intactId="EBI-536879">
        <id>O43482</id>
    </interactant>
    <interactant intactId="EBI-1246261">
        <id>O14561</id>
        <label>NDUFAB1</label>
    </interactant>
    <organismsDiffer>false</organismsDiffer>
    <experiments>3</experiments>
</comment>
<comment type="interaction">
    <interactant intactId="EBI-536879">
        <id>O43482</id>
    </interactant>
    <interactant intactId="EBI-10172876">
        <id>Q7Z6G3-2</id>
        <label>NECAB2</label>
    </interactant>
    <organismsDiffer>false</organismsDiffer>
    <experiments>6</experiments>
</comment>
<comment type="interaction">
    <interactant intactId="EBI-536879">
        <id>O43482</id>
    </interactant>
    <interactant intactId="EBI-475646">
        <id>P07196</id>
        <label>NEFL</label>
    </interactant>
    <organismsDiffer>false</organismsDiffer>
    <experiments>3</experiments>
</comment>
<comment type="interaction">
    <interactant intactId="EBI-536879">
        <id>O43482</id>
    </interactant>
    <interactant intactId="EBI-741048">
        <id>Q7Z3B4</id>
        <label>NUP54</label>
    </interactant>
    <organismsDiffer>false</organismsDiffer>
    <experiments>3</experiments>
</comment>
<comment type="interaction">
    <interactant intactId="EBI-536879">
        <id>O43482</id>
    </interactant>
    <interactant intactId="EBI-2811583">
        <id>Q9BVL2</id>
        <label>NUP58</label>
    </interactant>
    <organismsDiffer>false</organismsDiffer>
    <experiments>3</experiments>
</comment>
<comment type="interaction">
    <interactant intactId="EBI-536879">
        <id>O43482</id>
    </interactant>
    <interactant intactId="EBI-347978">
        <id>P37198</id>
        <label>NUP62</label>
    </interactant>
    <organismsDiffer>false</organismsDiffer>
    <experiments>6</experiments>
</comment>
<comment type="interaction">
    <interactant intactId="EBI-536879">
        <id>O43482</id>
    </interactant>
    <interactant intactId="EBI-536879">
        <id>O43482</id>
        <label>OIP5</label>
    </interactant>
    <organismsDiffer>false</organismsDiffer>
    <experiments>4</experiments>
</comment>
<comment type="interaction">
    <interactant intactId="EBI-536879">
        <id>O43482</id>
    </interactant>
    <interactant intactId="EBI-10181968">
        <id>Q7Z4N8</id>
        <label>P4HA3</label>
    </interactant>
    <organismsDiffer>false</organismsDiffer>
    <experiments>3</experiments>
</comment>
<comment type="interaction">
    <interactant intactId="EBI-536879">
        <id>O43482</id>
    </interactant>
    <interactant intactId="EBI-11022007">
        <id>Q9HBE1-4</id>
        <label>PATZ1</label>
    </interactant>
    <organismsDiffer>false</organismsDiffer>
    <experiments>3</experiments>
</comment>
<comment type="interaction">
    <interactant intactId="EBI-536879">
        <id>O43482</id>
    </interactant>
    <interactant intactId="EBI-14131832">
        <id>Q8N4B1-4</id>
        <label>PHETA1</label>
    </interactant>
    <organismsDiffer>false</organismsDiffer>
    <experiments>3</experiments>
</comment>
<comment type="interaction">
    <interactant intactId="EBI-536879">
        <id>O43482</id>
    </interactant>
    <interactant intactId="EBI-12138495">
        <id>Q99697-2</id>
        <label>PITX2</label>
    </interactant>
    <organismsDiffer>false</organismsDiffer>
    <experiments>3</experiments>
</comment>
<comment type="interaction">
    <interactant intactId="EBI-536879">
        <id>O43482</id>
    </interactant>
    <interactant intactId="EBI-2876622">
        <id>Q9UPG8</id>
        <label>PLAGL2</label>
    </interactant>
    <organismsDiffer>false</organismsDiffer>
    <experiments>3</experiments>
</comment>
<comment type="interaction">
    <interactant intactId="EBI-536879">
        <id>O43482</id>
    </interactant>
    <interactant intactId="EBI-394753">
        <id>P52435</id>
        <label>POLR2J</label>
    </interactant>
    <organismsDiffer>false</organismsDiffer>
    <experiments>3</experiments>
</comment>
<comment type="interaction">
    <interactant intactId="EBI-536879">
        <id>O43482</id>
    </interactant>
    <interactant intactId="EBI-12029004">
        <id>P78424</id>
        <label>POU6F2</label>
    </interactant>
    <organismsDiffer>false</organismsDiffer>
    <experiments>3</experiments>
</comment>
<comment type="interaction">
    <interactant intactId="EBI-536879">
        <id>O43482</id>
    </interactant>
    <interactant intactId="EBI-749195">
        <id>P60891</id>
        <label>PRPS1</label>
    </interactant>
    <organismsDiffer>false</organismsDiffer>
    <experiments>3</experiments>
</comment>
<comment type="interaction">
    <interactant intactId="EBI-536879">
        <id>O43482</id>
    </interactant>
    <interactant intactId="EBI-11986293">
        <id>P0CG20</id>
        <label>PRR35</label>
    </interactant>
    <organismsDiffer>false</organismsDiffer>
    <experiments>3</experiments>
</comment>
<comment type="interaction">
    <interactant intactId="EBI-536879">
        <id>O43482</id>
    </interactant>
    <interactant intactId="EBI-372273">
        <id>P20618</id>
        <label>PSMB1</label>
    </interactant>
    <organismsDiffer>false</organismsDiffer>
    <experiments>3</experiments>
</comment>
<comment type="interaction">
    <interactant intactId="EBI-536879">
        <id>O43482</id>
    </interactant>
    <interactant intactId="EBI-958239">
        <id>Q9ULW5</id>
        <label>RAB26</label>
    </interactant>
    <organismsDiffer>false</organismsDiffer>
    <experiments>3</experiments>
</comment>
<comment type="interaction">
    <interactant intactId="EBI-536879">
        <id>O43482</id>
    </interactant>
    <interactant intactId="EBI-14093916">
        <id>Q9UJ41-4</id>
        <label>RABGEF1</label>
    </interactant>
    <organismsDiffer>false</organismsDiffer>
    <experiments>3</experiments>
</comment>
<comment type="interaction">
    <interactant intactId="EBI-536879">
        <id>O43482</id>
    </interactant>
    <interactant intactId="EBI-365996">
        <id>P04049</id>
        <label>RAF1</label>
    </interactant>
    <organismsDiffer>false</organismsDiffer>
    <experiments>4</experiments>
</comment>
<comment type="interaction">
    <interactant intactId="EBI-536879">
        <id>O43482</id>
    </interactant>
    <interactant intactId="EBI-10265323">
        <id>Q8N443</id>
        <label>RIBC1</label>
    </interactant>
    <organismsDiffer>false</organismsDiffer>
    <experiments>3</experiments>
</comment>
<comment type="interaction">
    <interactant intactId="EBI-536879">
        <id>O43482</id>
    </interactant>
    <interactant intactId="EBI-11984663">
        <id>Q06455-2</id>
        <label>RUNX1T1</label>
    </interactant>
    <organismsDiffer>false</organismsDiffer>
    <experiments>3</experiments>
</comment>
<comment type="interaction">
    <interactant intactId="EBI-536879">
        <id>O43482</id>
    </interactant>
    <interactant intactId="EBI-6257312">
        <id>Q9BVN2</id>
        <label>RUSC1</label>
    </interactant>
    <organismsDiffer>false</organismsDiffer>
    <experiments>3</experiments>
</comment>
<comment type="interaction">
    <interactant intactId="EBI-536879">
        <id>O43482</id>
    </interactant>
    <interactant intactId="EBI-12198403">
        <id>Q8WXG8</id>
        <label>S100Z</label>
    </interactant>
    <organismsDiffer>false</organismsDiffer>
    <experiments>3</experiments>
</comment>
<comment type="interaction">
    <interactant intactId="EBI-536879">
        <id>O43482</id>
    </interactant>
    <interactant intactId="EBI-12148649">
        <id>Q7Z3H4</id>
        <label>SAMD7</label>
    </interactant>
    <organismsDiffer>false</organismsDiffer>
    <experiments>3</experiments>
</comment>
<comment type="interaction">
    <interactant intactId="EBI-536879">
        <id>O43482</id>
    </interactant>
    <interactant intactId="EBI-3957636">
        <id>Q8IYX7</id>
        <label>SAXO1</label>
    </interactant>
    <organismsDiffer>false</organismsDiffer>
    <experiments>3</experiments>
</comment>
<comment type="interaction">
    <interactant intactId="EBI-536879">
        <id>O43482</id>
    </interactant>
    <interactant intactId="EBI-12000762">
        <id>Q7Z5V6-2</id>
        <label>SAXO4</label>
    </interactant>
    <organismsDiffer>false</organismsDiffer>
    <experiments>3</experiments>
</comment>
<comment type="interaction">
    <interactant intactId="EBI-536879">
        <id>O43482</id>
    </interactant>
    <interactant intactId="EBI-12037847">
        <id>Q6ZSJ9</id>
        <label>SHISA6</label>
    </interactant>
    <organismsDiffer>false</organismsDiffer>
    <experiments>6</experiments>
</comment>
<comment type="interaction">
    <interactant intactId="EBI-536879">
        <id>O43482</id>
    </interactant>
    <interactant intactId="EBI-2902468">
        <id>P12757</id>
        <label>SKIL</label>
    </interactant>
    <organismsDiffer>false</organismsDiffer>
    <experiments>3</experiments>
</comment>
<comment type="interaction">
    <interactant intactId="EBI-536879">
        <id>O43482</id>
    </interactant>
    <interactant intactId="EBI-455078">
        <id>Q969G3</id>
        <label>SMARCE1</label>
    </interactant>
    <organismsDiffer>false</organismsDiffer>
    <experiments>3</experiments>
</comment>
<comment type="interaction">
    <interactant intactId="EBI-536879">
        <id>O43482</id>
    </interactant>
    <interactant intactId="EBI-9675976">
        <id>Q9BV90</id>
        <label>SNRNP25</label>
    </interactant>
    <organismsDiffer>false</organismsDiffer>
    <experiments>3</experiments>
</comment>
<comment type="interaction">
    <interactant intactId="EBI-536879">
        <id>O43482</id>
    </interactant>
    <interactant intactId="EBI-372475">
        <id>P14678-2</id>
        <label>SNRPB</label>
    </interactant>
    <organismsDiffer>false</organismsDiffer>
    <experiments>3</experiments>
</comment>
<comment type="interaction">
    <interactant intactId="EBI-536879">
        <id>O43482</id>
    </interactant>
    <interactant intactId="EBI-12288855">
        <id>Q5JUK2</id>
        <label>SOHLH1</label>
    </interactant>
    <organismsDiffer>false</organismsDiffer>
    <experiments>3</experiments>
</comment>
<comment type="interaction">
    <interactant intactId="EBI-536879">
        <id>O43482</id>
    </interactant>
    <interactant intactId="EBI-741237">
        <id>O60504</id>
        <label>SORBS3</label>
    </interactant>
    <organismsDiffer>false</organismsDiffer>
    <experiments>3</experiments>
</comment>
<comment type="interaction">
    <interactant intactId="EBI-536879">
        <id>O43482</id>
    </interactant>
    <interactant intactId="EBI-12041693">
        <id>Q86W54-2</id>
        <label>SPATA24</label>
    </interactant>
    <organismsDiffer>false</organismsDiffer>
    <experiments>3</experiments>
</comment>
<comment type="interaction">
    <interactant intactId="EBI-536879">
        <id>O43482</id>
    </interactant>
    <interactant intactId="EBI-10174456">
        <id>Q8N865</id>
        <label>SPMIP4</label>
    </interactant>
    <organismsDiffer>false</organismsDiffer>
    <experiments>3</experiments>
</comment>
<comment type="interaction">
    <interactant intactId="EBI-536879">
        <id>O43482</id>
    </interactant>
    <interactant intactId="EBI-8644516">
        <id>Q9BXF9</id>
        <label>TEKT3</label>
    </interactant>
    <organismsDiffer>false</organismsDiffer>
    <experiments>5</experiments>
</comment>
<comment type="interaction">
    <interactant intactId="EBI-536879">
        <id>O43482</id>
    </interactant>
    <interactant intactId="EBI-12090309">
        <id>Q9BXU0</id>
        <label>TEX12</label>
    </interactant>
    <organismsDiffer>false</organismsDiffer>
    <experiments>3</experiments>
</comment>
<comment type="interaction">
    <interactant intactId="EBI-536879">
        <id>O43482</id>
    </interactant>
    <interactant intactId="EBI-11952651">
        <id>Q7Z6R9</id>
        <label>TFAP2D</label>
    </interactant>
    <organismsDiffer>false</organismsDiffer>
    <experiments>5</experiments>
</comment>
<comment type="interaction">
    <interactant intactId="EBI-536879">
        <id>O43482</id>
    </interactant>
    <interactant intactId="EBI-1105213">
        <id>Q9UBB9</id>
        <label>TFIP11</label>
    </interactant>
    <organismsDiffer>false</organismsDiffer>
    <experiments>6</experiments>
</comment>
<comment type="interaction">
    <interactant intactId="EBI-536879">
        <id>O43482</id>
    </interactant>
    <interactant intactId="EBI-1049822">
        <id>O60220</id>
        <label>TIMM8A</label>
    </interactant>
    <organismsDiffer>false</organismsDiffer>
    <experiments>3</experiments>
</comment>
<comment type="interaction">
    <interactant intactId="EBI-536879">
        <id>O43482</id>
    </interactant>
    <interactant intactId="EBI-3939165">
        <id>O43711</id>
        <label>TLX3</label>
    </interactant>
    <organismsDiffer>false</organismsDiffer>
    <experiments>3</experiments>
</comment>
<comment type="interaction">
    <interactant intactId="EBI-536879">
        <id>O43482</id>
    </interactant>
    <interactant intactId="EBI-355607">
        <id>P06753</id>
        <label>TPM3</label>
    </interactant>
    <organismsDiffer>false</organismsDiffer>
    <experiments>12</experiments>
</comment>
<comment type="interaction">
    <interactant intactId="EBI-536879">
        <id>O43482</id>
    </interactant>
    <interactant intactId="EBI-10184033">
        <id>Q5VU62</id>
        <label>TPM3</label>
    </interactant>
    <organismsDiffer>false</organismsDiffer>
    <experiments>5</experiments>
</comment>
<comment type="interaction">
    <interactant intactId="EBI-536879">
        <id>O43482</id>
    </interactant>
    <interactant intactId="EBI-14115717">
        <id>Q8N7U7-2</id>
        <label>TPRX1</label>
    </interactant>
    <organismsDiffer>false</organismsDiffer>
    <experiments>5</experiments>
</comment>
<comment type="interaction">
    <interactant intactId="EBI-536879">
        <id>O43482</id>
    </interactant>
    <interactant intactId="EBI-492476">
        <id>Q96RU7</id>
        <label>TRIB3</label>
    </interactant>
    <organismsDiffer>false</organismsDiffer>
    <experiments>3</experiments>
</comment>
<comment type="interaction">
    <interactant intactId="EBI-536879">
        <id>O43482</id>
    </interactant>
    <interactant intactId="EBI-10259086">
        <id>Q86UV6-2</id>
        <label>TRIM74</label>
    </interactant>
    <organismsDiffer>false</organismsDiffer>
    <experiments>3</experiments>
</comment>
<comment type="interaction">
    <interactant intactId="EBI-536879">
        <id>O43482</id>
    </interactant>
    <interactant intactId="EBI-742327">
        <id>Q15654</id>
        <label>TRIP6</label>
    </interactant>
    <organismsDiffer>false</organismsDiffer>
    <experiments>4</experiments>
</comment>
<comment type="interaction">
    <interactant intactId="EBI-536879">
        <id>O43482</id>
    </interactant>
    <interactant intactId="EBI-2349743">
        <id>Q12815</id>
        <label>TROAP</label>
    </interactant>
    <organismsDiffer>false</organismsDiffer>
    <experiments>3</experiments>
</comment>
<comment type="interaction">
    <interactant intactId="EBI-536879">
        <id>O43482</id>
    </interactant>
    <interactant intactId="EBI-739895">
        <id>Q8N6Y0</id>
        <label>USHBP1</label>
    </interactant>
    <organismsDiffer>false</organismsDiffer>
    <experiments>3</experiments>
</comment>
<comment type="interaction">
    <interactant intactId="EBI-536879">
        <id>O43482</id>
    </interactant>
    <interactant intactId="EBI-743272">
        <id>O75604</id>
        <label>USP2</label>
    </interactant>
    <organismsDiffer>false</organismsDiffer>
    <experiments>3</experiments>
</comment>
<comment type="interaction">
    <interactant intactId="EBI-536879">
        <id>O43482</id>
    </interactant>
    <interactant intactId="EBI-11975223">
        <id>Q70EL1-9</id>
        <label>USP54</label>
    </interactant>
    <organismsDiffer>false</organismsDiffer>
    <experiments>3</experiments>
</comment>
<comment type="interaction">
    <interactant intactId="EBI-536879">
        <id>O43482</id>
    </interactant>
    <interactant intactId="EBI-720609">
        <id>O76024</id>
        <label>WFS1</label>
    </interactant>
    <organismsDiffer>false</organismsDiffer>
    <experiments>3</experiments>
</comment>
<comment type="interaction">
    <interactant intactId="EBI-536879">
        <id>O43482</id>
    </interactant>
    <interactant intactId="EBI-1051237">
        <id>Q9BYJ9</id>
        <label>YTHDF1</label>
    </interactant>
    <organismsDiffer>false</organismsDiffer>
    <experiments>3</experiments>
</comment>
<comment type="interaction">
    <interactant intactId="EBI-536879">
        <id>O43482</id>
    </interactant>
    <interactant intactId="EBI-11963196">
        <id>Q15915</id>
        <label>ZIC1</label>
    </interactant>
    <organismsDiffer>false</organismsDiffer>
    <experiments>5</experiments>
</comment>
<comment type="interaction">
    <interactant intactId="EBI-536879">
        <id>O43482</id>
    </interactant>
    <interactant intactId="EBI-740727">
        <id>Q8TAU3</id>
        <label>ZNF417</label>
    </interactant>
    <organismsDiffer>false</organismsDiffer>
    <experiments>3</experiments>
</comment>
<comment type="interaction">
    <interactant intactId="EBI-536879">
        <id>O43482</id>
    </interactant>
    <interactant intactId="EBI-625509">
        <id>Q8N720</id>
        <label>ZNF655</label>
    </interactant>
    <organismsDiffer>false</organismsDiffer>
    <experiments>3</experiments>
</comment>
<comment type="interaction">
    <interactant intactId="EBI-536879">
        <id>O43482</id>
    </interactant>
    <interactant intactId="EBI-25900580">
        <id>Q9Y649</id>
    </interactant>
    <organismsDiffer>false</organismsDiffer>
    <experiments>3</experiments>
</comment>
<comment type="subcellular location">
    <subcellularLocation>
        <location evidence="2">Nucleus</location>
    </subcellularLocation>
    <subcellularLocation>
        <location evidence="2">Chromosome</location>
    </subcellularLocation>
    <subcellularLocation>
        <location evidence="2">Chromosome</location>
        <location evidence="2">Centromere</location>
    </subcellularLocation>
    <text>Associated with centromeres in interphase cells, from late anaphase to the G1 phase. Not detected on centromeres during earlier phases of mitosis. Associated with chromatin.</text>
</comment>
<comment type="similarity">
    <text evidence="1">Belongs to the mis18 family.</text>
</comment>
<comment type="sequence caution" evidence="6">
    <conflict type="erroneous initiation">
        <sequence resource="EMBL-CDS" id="AAC39561"/>
    </conflict>
</comment>
<sequence length="229" mass="24691">MAAQPLRHRSRCATPPRGDFCGGTERAIDQASFTTSMEWDTQVVKGSSPLGPAGLGAEEPAAGPQLPSWLQPERCAVFQCAQCHAVLADSVHLAWDLSRSLGAVVFSRVTNNVVLEAPFLVGIEGSLKGSTYNLLFCGSCGIPVGFHLYSTHAALAALRGHFCLSSDKMVCYLLKTKAIVNASEMDIQNVPLSEKIAELKEKIVLTHNRLKSLMKILSEVTPDQSKPEN</sequence>
<accession>O43482</accession>
<accession>Q96BX7</accession>
<dbReference type="EMBL" id="AF025441">
    <property type="protein sequence ID" value="AAC39561.1"/>
    <property type="status" value="ALT_INIT"/>
    <property type="molecule type" value="mRNA"/>
</dbReference>
<dbReference type="EMBL" id="BC015050">
    <property type="protein sequence ID" value="AAH15050.1"/>
    <property type="molecule type" value="mRNA"/>
</dbReference>
<dbReference type="CCDS" id="CCDS10074.1"/>
<dbReference type="RefSeq" id="NP_001304789.1">
    <property type="nucleotide sequence ID" value="NM_001317860.1"/>
</dbReference>
<dbReference type="RefSeq" id="NP_009211.1">
    <property type="nucleotide sequence ID" value="NM_007280.2"/>
</dbReference>
<dbReference type="PDB" id="7SFY">
    <property type="method" value="X-ray"/>
    <property type="resolution" value="2.50 A"/>
    <property type="chains" value="C/F=188-229"/>
</dbReference>
<dbReference type="PDBsum" id="7SFY"/>
<dbReference type="EMDB" id="EMD-50218"/>
<dbReference type="EMDB" id="EMD-50219"/>
<dbReference type="EMDB" id="EMD-50220"/>
<dbReference type="SMR" id="O43482"/>
<dbReference type="BioGRID" id="116467">
    <property type="interactions" value="218"/>
</dbReference>
<dbReference type="ComplexPortal" id="CPX-3272">
    <property type="entry name" value="Mis18 complex"/>
</dbReference>
<dbReference type="CORUM" id="O43482"/>
<dbReference type="FunCoup" id="O43482">
    <property type="interactions" value="1589"/>
</dbReference>
<dbReference type="IntAct" id="O43482">
    <property type="interactions" value="182"/>
</dbReference>
<dbReference type="MINT" id="O43482"/>
<dbReference type="STRING" id="9606.ENSP00000220514"/>
<dbReference type="GlyGen" id="O43482">
    <property type="glycosylation" value="1 site, 4 N-linked glycans (1 site)"/>
</dbReference>
<dbReference type="iPTMnet" id="O43482"/>
<dbReference type="PhosphoSitePlus" id="O43482"/>
<dbReference type="BioMuta" id="OIP5"/>
<dbReference type="jPOST" id="O43482"/>
<dbReference type="MassIVE" id="O43482"/>
<dbReference type="PaxDb" id="9606-ENSP00000220514"/>
<dbReference type="PeptideAtlas" id="O43482"/>
<dbReference type="ProteomicsDB" id="48965"/>
<dbReference type="Pumba" id="O43482"/>
<dbReference type="Antibodypedia" id="23263">
    <property type="antibodies" value="147 antibodies from 20 providers"/>
</dbReference>
<dbReference type="DNASU" id="11339"/>
<dbReference type="Ensembl" id="ENST00000220514.8">
    <property type="protein sequence ID" value="ENSP00000220514.3"/>
    <property type="gene ID" value="ENSG00000104147.9"/>
</dbReference>
<dbReference type="GeneID" id="11339"/>
<dbReference type="KEGG" id="hsa:11339"/>
<dbReference type="MANE-Select" id="ENST00000220514.8">
    <property type="protein sequence ID" value="ENSP00000220514.3"/>
    <property type="RefSeq nucleotide sequence ID" value="NM_007280.2"/>
    <property type="RefSeq protein sequence ID" value="NP_009211.1"/>
</dbReference>
<dbReference type="UCSC" id="uc001znp.3">
    <property type="organism name" value="human"/>
</dbReference>
<dbReference type="AGR" id="HGNC:20300"/>
<dbReference type="CTD" id="11339"/>
<dbReference type="DisGeNET" id="11339"/>
<dbReference type="GeneCards" id="OIP5"/>
<dbReference type="HGNC" id="HGNC:20300">
    <property type="gene designation" value="OIP5"/>
</dbReference>
<dbReference type="HPA" id="ENSG00000104147">
    <property type="expression patterns" value="Tissue enhanced (bone marrow, skeletal muscle, testis)"/>
</dbReference>
<dbReference type="MIM" id="606020">
    <property type="type" value="gene"/>
</dbReference>
<dbReference type="neXtProt" id="NX_O43482"/>
<dbReference type="OpenTargets" id="ENSG00000104147"/>
<dbReference type="PharmGKB" id="PA134887641"/>
<dbReference type="VEuPathDB" id="HostDB:ENSG00000104147"/>
<dbReference type="eggNOG" id="ENOG502S5R3">
    <property type="taxonomic scope" value="Eukaryota"/>
</dbReference>
<dbReference type="GeneTree" id="ENSGT00940000154267"/>
<dbReference type="InParanoid" id="O43482"/>
<dbReference type="OMA" id="MDIHNVP"/>
<dbReference type="OrthoDB" id="9926299at2759"/>
<dbReference type="PAN-GO" id="O43482">
    <property type="GO annotations" value="5 GO annotations based on evolutionary models"/>
</dbReference>
<dbReference type="PhylomeDB" id="O43482"/>
<dbReference type="TreeFam" id="TF330739"/>
<dbReference type="PathwayCommons" id="O43482"/>
<dbReference type="Reactome" id="R-HSA-606279">
    <property type="pathway name" value="Deposition of new CENPA-containing nucleosomes at the centromere"/>
</dbReference>
<dbReference type="SignaLink" id="O43482"/>
<dbReference type="BioGRID-ORCS" id="11339">
    <property type="hits" value="633 hits in 1165 CRISPR screens"/>
</dbReference>
<dbReference type="ChiTaRS" id="OIP5">
    <property type="organism name" value="human"/>
</dbReference>
<dbReference type="GenomeRNAi" id="11339"/>
<dbReference type="Pharos" id="O43482">
    <property type="development level" value="Tbio"/>
</dbReference>
<dbReference type="PRO" id="PR:O43482"/>
<dbReference type="Proteomes" id="UP000005640">
    <property type="component" value="Chromosome 15"/>
</dbReference>
<dbReference type="RNAct" id="O43482">
    <property type="molecule type" value="protein"/>
</dbReference>
<dbReference type="Bgee" id="ENSG00000104147">
    <property type="expression patterns" value="Expressed in oocyte and 121 other cell types or tissues"/>
</dbReference>
<dbReference type="ExpressionAtlas" id="O43482">
    <property type="expression patterns" value="baseline and differential"/>
</dbReference>
<dbReference type="GO" id="GO:0015030">
    <property type="term" value="C:Cajal body"/>
    <property type="evidence" value="ECO:0000314"/>
    <property type="project" value="MGI"/>
</dbReference>
<dbReference type="GO" id="GO:0000785">
    <property type="term" value="C:chromatin"/>
    <property type="evidence" value="ECO:0000314"/>
    <property type="project" value="MGI"/>
</dbReference>
<dbReference type="GO" id="GO:0010369">
    <property type="term" value="C:chromocenter"/>
    <property type="evidence" value="ECO:0007669"/>
    <property type="project" value="Ensembl"/>
</dbReference>
<dbReference type="GO" id="GO:0000775">
    <property type="term" value="C:chromosome, centromeric region"/>
    <property type="evidence" value="ECO:0000318"/>
    <property type="project" value="GO_Central"/>
</dbReference>
<dbReference type="GO" id="GO:0043231">
    <property type="term" value="C:intracellular membrane-bounded organelle"/>
    <property type="evidence" value="ECO:0000314"/>
    <property type="project" value="HPA"/>
</dbReference>
<dbReference type="GO" id="GO:0016607">
    <property type="term" value="C:nuclear speck"/>
    <property type="evidence" value="ECO:0000314"/>
    <property type="project" value="HPA"/>
</dbReference>
<dbReference type="GO" id="GO:0005654">
    <property type="term" value="C:nucleoplasm"/>
    <property type="evidence" value="ECO:0000304"/>
    <property type="project" value="Reactome"/>
</dbReference>
<dbReference type="GO" id="GO:0005634">
    <property type="term" value="C:nucleus"/>
    <property type="evidence" value="ECO:0000314"/>
    <property type="project" value="MGI"/>
</dbReference>
<dbReference type="GO" id="GO:0042802">
    <property type="term" value="F:identical protein binding"/>
    <property type="evidence" value="ECO:0000353"/>
    <property type="project" value="IntAct"/>
</dbReference>
<dbReference type="GO" id="GO:0046872">
    <property type="term" value="F:metal ion binding"/>
    <property type="evidence" value="ECO:0007669"/>
    <property type="project" value="UniProtKB-KW"/>
</dbReference>
<dbReference type="GO" id="GO:0007154">
    <property type="term" value="P:cell communication"/>
    <property type="evidence" value="ECO:0000303"/>
    <property type="project" value="UniProtKB"/>
</dbReference>
<dbReference type="GO" id="GO:0051301">
    <property type="term" value="P:cell division"/>
    <property type="evidence" value="ECO:0007669"/>
    <property type="project" value="UniProtKB-KW"/>
</dbReference>
<dbReference type="GO" id="GO:0034080">
    <property type="term" value="P:CENP-A containing chromatin assembly"/>
    <property type="evidence" value="ECO:0000318"/>
    <property type="project" value="GO_Central"/>
</dbReference>
<dbReference type="GO" id="GO:0007059">
    <property type="term" value="P:chromosome segregation"/>
    <property type="evidence" value="ECO:0000318"/>
    <property type="project" value="GO_Central"/>
</dbReference>
<dbReference type="InterPro" id="IPR034752">
    <property type="entry name" value="Mis18"/>
</dbReference>
<dbReference type="InterPro" id="IPR004910">
    <property type="entry name" value="Yippee/Mis18/Cereblon"/>
</dbReference>
<dbReference type="PANTHER" id="PTHR16431">
    <property type="entry name" value="NEUROGENIC PROTEIN MASTERMIND"/>
    <property type="match status" value="1"/>
</dbReference>
<dbReference type="PANTHER" id="PTHR16431:SF3">
    <property type="entry name" value="PROTEIN MIS18-BETA"/>
    <property type="match status" value="1"/>
</dbReference>
<dbReference type="Pfam" id="PF03226">
    <property type="entry name" value="Yippee-Mis18"/>
    <property type="match status" value="1"/>
</dbReference>
<dbReference type="PROSITE" id="PS51793">
    <property type="entry name" value="MIS18"/>
    <property type="match status" value="1"/>
</dbReference>
<evidence type="ECO:0000255" key="1">
    <source>
        <dbReference type="PROSITE-ProRule" id="PRU01129"/>
    </source>
</evidence>
<evidence type="ECO:0000269" key="2">
    <source>
    </source>
</evidence>
<evidence type="ECO:0000269" key="3">
    <source>
    </source>
</evidence>
<evidence type="ECO:0000269" key="4">
    <source>
    </source>
</evidence>
<evidence type="ECO:0000303" key="5">
    <source>
    </source>
</evidence>
<evidence type="ECO:0000305" key="6"/>
<evidence type="ECO:0007744" key="7">
    <source>
    </source>
</evidence>
<evidence type="ECO:0007744" key="8">
    <source>
    </source>
</evidence>
<evidence type="ECO:0007744" key="9">
    <source>
    </source>
</evidence>
<evidence type="ECO:0007744" key="10">
    <source>
    </source>
</evidence>
<evidence type="ECO:0007829" key="11">
    <source>
        <dbReference type="PDB" id="7SFY"/>
    </source>
</evidence>